<reference key="1">
    <citation type="journal article" date="2003" name="Nat. Biotechnol.">
        <title>The genome sequence of the entomopathogenic bacterium Photorhabdus luminescens.</title>
        <authorList>
            <person name="Duchaud E."/>
            <person name="Rusniok C."/>
            <person name="Frangeul L."/>
            <person name="Buchrieser C."/>
            <person name="Givaudan A."/>
            <person name="Taourit S."/>
            <person name="Bocs S."/>
            <person name="Boursaux-Eude C."/>
            <person name="Chandler M."/>
            <person name="Charles J.-F."/>
            <person name="Dassa E."/>
            <person name="Derose R."/>
            <person name="Derzelle S."/>
            <person name="Freyssinet G."/>
            <person name="Gaudriault S."/>
            <person name="Medigue C."/>
            <person name="Lanois A."/>
            <person name="Powell K."/>
            <person name="Siguier P."/>
            <person name="Vincent R."/>
            <person name="Wingate V."/>
            <person name="Zouine M."/>
            <person name="Glaser P."/>
            <person name="Boemare N."/>
            <person name="Danchin A."/>
            <person name="Kunst F."/>
        </authorList>
    </citation>
    <scope>NUCLEOTIDE SEQUENCE [LARGE SCALE GENOMIC DNA]</scope>
    <source>
        <strain>DSM 15139 / CIP 105565 / TT01</strain>
    </source>
</reference>
<gene>
    <name evidence="1" type="primary">rplI</name>
    <name type="ordered locus">plu4570</name>
</gene>
<accession>Q7MYU9</accession>
<protein>
    <recommendedName>
        <fullName evidence="1">Large ribosomal subunit protein bL9</fullName>
    </recommendedName>
    <alternativeName>
        <fullName evidence="2">50S ribosomal protein L9</fullName>
    </alternativeName>
</protein>
<sequence>MQIILLDKVANLGSLGDQVNVKPGYARNYLVPQGKAVPATKKNIEFFEARRAELEANLANVLATAEARAEKINALGSVTIASKAGDEGKLFGSVGTRDIADAVTAAGVEVSKSEVRLPNGVLRTIGEHEVNFQVHSDVFAKLNVNIVAEA</sequence>
<evidence type="ECO:0000255" key="1">
    <source>
        <dbReference type="HAMAP-Rule" id="MF_00503"/>
    </source>
</evidence>
<evidence type="ECO:0000305" key="2"/>
<comment type="function">
    <text evidence="1">Binds to the 23S rRNA.</text>
</comment>
<comment type="similarity">
    <text evidence="1">Belongs to the bacterial ribosomal protein bL9 family.</text>
</comment>
<feature type="chain" id="PRO_0000236562" description="Large ribosomal subunit protein bL9">
    <location>
        <begin position="1"/>
        <end position="150"/>
    </location>
</feature>
<keyword id="KW-1185">Reference proteome</keyword>
<keyword id="KW-0687">Ribonucleoprotein</keyword>
<keyword id="KW-0689">Ribosomal protein</keyword>
<keyword id="KW-0694">RNA-binding</keyword>
<keyword id="KW-0699">rRNA-binding</keyword>
<dbReference type="EMBL" id="BX571874">
    <property type="protein sequence ID" value="CAE16942.1"/>
    <property type="molecule type" value="Genomic_DNA"/>
</dbReference>
<dbReference type="RefSeq" id="WP_011148644.1">
    <property type="nucleotide sequence ID" value="NC_005126.1"/>
</dbReference>
<dbReference type="SMR" id="Q7MYU9"/>
<dbReference type="STRING" id="243265.plu4570"/>
<dbReference type="GeneID" id="48850782"/>
<dbReference type="KEGG" id="plu:plu4570"/>
<dbReference type="eggNOG" id="COG0359">
    <property type="taxonomic scope" value="Bacteria"/>
</dbReference>
<dbReference type="HOGENOM" id="CLU_078938_4_1_6"/>
<dbReference type="OrthoDB" id="9788336at2"/>
<dbReference type="Proteomes" id="UP000002514">
    <property type="component" value="Chromosome"/>
</dbReference>
<dbReference type="GO" id="GO:1990904">
    <property type="term" value="C:ribonucleoprotein complex"/>
    <property type="evidence" value="ECO:0007669"/>
    <property type="project" value="UniProtKB-KW"/>
</dbReference>
<dbReference type="GO" id="GO:0005840">
    <property type="term" value="C:ribosome"/>
    <property type="evidence" value="ECO:0007669"/>
    <property type="project" value="UniProtKB-KW"/>
</dbReference>
<dbReference type="GO" id="GO:0019843">
    <property type="term" value="F:rRNA binding"/>
    <property type="evidence" value="ECO:0007669"/>
    <property type="project" value="UniProtKB-UniRule"/>
</dbReference>
<dbReference type="GO" id="GO:0003735">
    <property type="term" value="F:structural constituent of ribosome"/>
    <property type="evidence" value="ECO:0007669"/>
    <property type="project" value="InterPro"/>
</dbReference>
<dbReference type="GO" id="GO:0006412">
    <property type="term" value="P:translation"/>
    <property type="evidence" value="ECO:0007669"/>
    <property type="project" value="UniProtKB-UniRule"/>
</dbReference>
<dbReference type="FunFam" id="3.10.430.100:FF:000001">
    <property type="entry name" value="50S ribosomal protein L9"/>
    <property type="match status" value="1"/>
</dbReference>
<dbReference type="FunFam" id="3.40.5.10:FF:000001">
    <property type="entry name" value="50S ribosomal protein L9"/>
    <property type="match status" value="1"/>
</dbReference>
<dbReference type="Gene3D" id="3.10.430.100">
    <property type="entry name" value="Ribosomal protein L9, C-terminal domain"/>
    <property type="match status" value="1"/>
</dbReference>
<dbReference type="Gene3D" id="3.40.5.10">
    <property type="entry name" value="Ribosomal protein L9, N-terminal domain"/>
    <property type="match status" value="1"/>
</dbReference>
<dbReference type="HAMAP" id="MF_00503">
    <property type="entry name" value="Ribosomal_bL9"/>
    <property type="match status" value="1"/>
</dbReference>
<dbReference type="InterPro" id="IPR000244">
    <property type="entry name" value="Ribosomal_bL9"/>
</dbReference>
<dbReference type="InterPro" id="IPR009027">
    <property type="entry name" value="Ribosomal_bL9/RNase_H1_N"/>
</dbReference>
<dbReference type="InterPro" id="IPR020594">
    <property type="entry name" value="Ribosomal_bL9_bac/chp"/>
</dbReference>
<dbReference type="InterPro" id="IPR020069">
    <property type="entry name" value="Ribosomal_bL9_C"/>
</dbReference>
<dbReference type="InterPro" id="IPR036791">
    <property type="entry name" value="Ribosomal_bL9_C_sf"/>
</dbReference>
<dbReference type="InterPro" id="IPR020070">
    <property type="entry name" value="Ribosomal_bL9_N"/>
</dbReference>
<dbReference type="InterPro" id="IPR036935">
    <property type="entry name" value="Ribosomal_bL9_N_sf"/>
</dbReference>
<dbReference type="NCBIfam" id="TIGR00158">
    <property type="entry name" value="L9"/>
    <property type="match status" value="1"/>
</dbReference>
<dbReference type="PANTHER" id="PTHR21368">
    <property type="entry name" value="50S RIBOSOMAL PROTEIN L9"/>
    <property type="match status" value="1"/>
</dbReference>
<dbReference type="Pfam" id="PF03948">
    <property type="entry name" value="Ribosomal_L9_C"/>
    <property type="match status" value="1"/>
</dbReference>
<dbReference type="Pfam" id="PF01281">
    <property type="entry name" value="Ribosomal_L9_N"/>
    <property type="match status" value="1"/>
</dbReference>
<dbReference type="SUPFAM" id="SSF55658">
    <property type="entry name" value="L9 N-domain-like"/>
    <property type="match status" value="1"/>
</dbReference>
<dbReference type="SUPFAM" id="SSF55653">
    <property type="entry name" value="Ribosomal protein L9 C-domain"/>
    <property type="match status" value="1"/>
</dbReference>
<dbReference type="PROSITE" id="PS00651">
    <property type="entry name" value="RIBOSOMAL_L9"/>
    <property type="match status" value="1"/>
</dbReference>
<organism>
    <name type="scientific">Photorhabdus laumondii subsp. laumondii (strain DSM 15139 / CIP 105565 / TT01)</name>
    <name type="common">Photorhabdus luminescens subsp. laumondii</name>
    <dbReference type="NCBI Taxonomy" id="243265"/>
    <lineage>
        <taxon>Bacteria</taxon>
        <taxon>Pseudomonadati</taxon>
        <taxon>Pseudomonadota</taxon>
        <taxon>Gammaproteobacteria</taxon>
        <taxon>Enterobacterales</taxon>
        <taxon>Morganellaceae</taxon>
        <taxon>Photorhabdus</taxon>
    </lineage>
</organism>
<name>RL9_PHOLL</name>
<proteinExistence type="inferred from homology"/>